<name>Y1098_METJA</name>
<reference key="1">
    <citation type="journal article" date="1996" name="Science">
        <title>Complete genome sequence of the methanogenic archaeon, Methanococcus jannaschii.</title>
        <authorList>
            <person name="Bult C.J."/>
            <person name="White O."/>
            <person name="Olsen G.J."/>
            <person name="Zhou L."/>
            <person name="Fleischmann R.D."/>
            <person name="Sutton G.G."/>
            <person name="Blake J.A."/>
            <person name="FitzGerald L.M."/>
            <person name="Clayton R.A."/>
            <person name="Gocayne J.D."/>
            <person name="Kerlavage A.R."/>
            <person name="Dougherty B.A."/>
            <person name="Tomb J.-F."/>
            <person name="Adams M.D."/>
            <person name="Reich C.I."/>
            <person name="Overbeek R."/>
            <person name="Kirkness E.F."/>
            <person name="Weinstock K.G."/>
            <person name="Merrick J.M."/>
            <person name="Glodek A."/>
            <person name="Scott J.L."/>
            <person name="Geoghagen N.S.M."/>
            <person name="Weidman J.F."/>
            <person name="Fuhrmann J.L."/>
            <person name="Nguyen D."/>
            <person name="Utterback T.R."/>
            <person name="Kelley J.M."/>
            <person name="Peterson J.D."/>
            <person name="Sadow P.W."/>
            <person name="Hanna M.C."/>
            <person name="Cotton M.D."/>
            <person name="Roberts K.M."/>
            <person name="Hurst M.A."/>
            <person name="Kaine B.P."/>
            <person name="Borodovsky M."/>
            <person name="Klenk H.-P."/>
            <person name="Fraser C.M."/>
            <person name="Smith H.O."/>
            <person name="Woese C.R."/>
            <person name="Venter J.C."/>
        </authorList>
    </citation>
    <scope>NUCLEOTIDE SEQUENCE [LARGE SCALE GENOMIC DNA]</scope>
    <source>
        <strain>ATCC 43067 / DSM 2661 / JAL-1 / JCM 10045 / NBRC 100440</strain>
    </source>
</reference>
<proteinExistence type="predicted"/>
<feature type="chain" id="PRO_0000107167" description="Uncharacterized protein MJ1098">
    <location>
        <begin position="1"/>
        <end position="254"/>
    </location>
</feature>
<organism>
    <name type="scientific">Methanocaldococcus jannaschii (strain ATCC 43067 / DSM 2661 / JAL-1 / JCM 10045 / NBRC 100440)</name>
    <name type="common">Methanococcus jannaschii</name>
    <dbReference type="NCBI Taxonomy" id="243232"/>
    <lineage>
        <taxon>Archaea</taxon>
        <taxon>Methanobacteriati</taxon>
        <taxon>Methanobacteriota</taxon>
        <taxon>Methanomada group</taxon>
        <taxon>Methanococci</taxon>
        <taxon>Methanococcales</taxon>
        <taxon>Methanocaldococcaceae</taxon>
        <taxon>Methanocaldococcus</taxon>
    </lineage>
</organism>
<gene>
    <name type="ordered locus">MJ1098</name>
</gene>
<protein>
    <recommendedName>
        <fullName>Uncharacterized protein MJ1098</fullName>
    </recommendedName>
</protein>
<accession>Q58498</accession>
<dbReference type="EMBL" id="L77117">
    <property type="protein sequence ID" value="AAB99101.1"/>
    <property type="molecule type" value="Genomic_DNA"/>
</dbReference>
<dbReference type="PIR" id="A64437">
    <property type="entry name" value="A64437"/>
</dbReference>
<dbReference type="RefSeq" id="WP_010870610.1">
    <property type="nucleotide sequence ID" value="NC_000909.1"/>
</dbReference>
<dbReference type="SMR" id="Q58498"/>
<dbReference type="STRING" id="243232.MJ_1098"/>
<dbReference type="PaxDb" id="243232-MJ_1098"/>
<dbReference type="EnsemblBacteria" id="AAB99101">
    <property type="protein sequence ID" value="AAB99101"/>
    <property type="gene ID" value="MJ_1098"/>
</dbReference>
<dbReference type="GeneID" id="1451995"/>
<dbReference type="KEGG" id="mja:MJ_1098"/>
<dbReference type="HOGENOM" id="CLU_1092434_0_0_2"/>
<dbReference type="InParanoid" id="Q58498"/>
<dbReference type="OrthoDB" id="315174at2157"/>
<dbReference type="Proteomes" id="UP000000805">
    <property type="component" value="Chromosome"/>
</dbReference>
<dbReference type="GO" id="GO:0004519">
    <property type="term" value="F:endonuclease activity"/>
    <property type="evidence" value="ECO:0007669"/>
    <property type="project" value="InterPro"/>
</dbReference>
<dbReference type="Gene3D" id="3.10.28.10">
    <property type="entry name" value="Homing endonucleases"/>
    <property type="match status" value="2"/>
</dbReference>
<dbReference type="InterPro" id="IPR027434">
    <property type="entry name" value="Homing_endonucl"/>
</dbReference>
<dbReference type="InterPro" id="IPR004860">
    <property type="entry name" value="LAGLIDADG_dom"/>
</dbReference>
<dbReference type="Pfam" id="PF03161">
    <property type="entry name" value="LAGLIDADG_2"/>
    <property type="match status" value="1"/>
</dbReference>
<dbReference type="SUPFAM" id="SSF55608">
    <property type="entry name" value="Homing endonucleases"/>
    <property type="match status" value="1"/>
</dbReference>
<sequence>MYEKYIVEGLSDREIAYLIGCGKATVVRARQKHGIYREDVKMCDDYTLDNISEDLRTFIDGLLLGDACITEKGNLLITQNKRYDWLEYVKHRFQQFGLNVYFHCYKYKRRTSEVIADLYVLSTSRYELFRQLRERWYPDGIKRIPNDLVINDEGLAQWYLGDGSLTKQKNGYKLELSTHGFTLDENKFLQQKLKLLYGFDFRISKKHQYRYLRLFKSKQVHAFCSIVEPFIPPSYRNKVRCLHDYQWLKSWDVI</sequence>
<keyword id="KW-1185">Reference proteome</keyword>